<gene>
    <name type="ordered locus">VACWR201</name>
</gene>
<protein>
    <recommendedName>
        <fullName>Uncharacterized protein VACWR201</fullName>
    </recommendedName>
</protein>
<organismHost>
    <name type="scientific">Bos taurus</name>
    <name type="common">Bovine</name>
    <dbReference type="NCBI Taxonomy" id="9913"/>
</organismHost>
<keyword id="KW-1043">Host membrane</keyword>
<keyword id="KW-0472">Membrane</keyword>
<keyword id="KW-1185">Reference proteome</keyword>
<keyword id="KW-0812">Transmembrane</keyword>
<keyword id="KW-1133">Transmembrane helix</keyword>
<evidence type="ECO:0000255" key="1"/>
<evidence type="ECO:0000305" key="2"/>
<dbReference type="EMBL" id="AY243312">
    <property type="protein sequence ID" value="AAO89480.1"/>
    <property type="molecule type" value="Genomic_DNA"/>
</dbReference>
<dbReference type="RefSeq" id="YP_233083.1">
    <property type="nucleotide sequence ID" value="NC_006998.1"/>
</dbReference>
<dbReference type="DNASU" id="3707578"/>
<dbReference type="GeneID" id="3707578"/>
<dbReference type="KEGG" id="vg:3707578"/>
<dbReference type="Proteomes" id="UP000000344">
    <property type="component" value="Genome"/>
</dbReference>
<dbReference type="GO" id="GO:0033644">
    <property type="term" value="C:host cell membrane"/>
    <property type="evidence" value="ECO:0007669"/>
    <property type="project" value="UniProtKB-SubCell"/>
</dbReference>
<dbReference type="GO" id="GO:0016020">
    <property type="term" value="C:membrane"/>
    <property type="evidence" value="ECO:0007669"/>
    <property type="project" value="UniProtKB-KW"/>
</dbReference>
<accession>Q80HT7</accession>
<feature type="chain" id="PRO_0000412621" description="Uncharacterized protein VACWR201">
    <location>
        <begin position="1"/>
        <end position="56"/>
    </location>
</feature>
<feature type="transmembrane region" description="Helical" evidence="1">
    <location>
        <begin position="33"/>
        <end position="53"/>
    </location>
</feature>
<sequence>MHVIDVDVRLYMSTFIIIDQSTENTSIDTTVTINIIYLAIMKIIMNIIMMIMIELV</sequence>
<name>VA201_VACCW</name>
<comment type="subcellular location">
    <subcellularLocation>
        <location evidence="2">Host membrane</location>
        <topology evidence="2">Single-pass membrane protein</topology>
    </subcellularLocation>
</comment>
<proteinExistence type="predicted"/>
<organism>
    <name type="scientific">Vaccinia virus (strain Western Reserve)</name>
    <name type="common">VACV</name>
    <name type="synonym">Vaccinia virus (strain WR)</name>
    <dbReference type="NCBI Taxonomy" id="10254"/>
    <lineage>
        <taxon>Viruses</taxon>
        <taxon>Varidnaviria</taxon>
        <taxon>Bamfordvirae</taxon>
        <taxon>Nucleocytoviricota</taxon>
        <taxon>Pokkesviricetes</taxon>
        <taxon>Chitovirales</taxon>
        <taxon>Poxviridae</taxon>
        <taxon>Chordopoxvirinae</taxon>
        <taxon>Orthopoxvirus</taxon>
        <taxon>Vaccinia virus</taxon>
    </lineage>
</organism>
<reference key="1">
    <citation type="submission" date="2003-02" db="EMBL/GenBank/DDBJ databases">
        <title>Sequencing of the coding region of Vaccinia-WR to an average 9-fold redundancy and an error rate of 0.16/10kb.</title>
        <authorList>
            <person name="Esposito J.J."/>
            <person name="Frace A.M."/>
            <person name="Sammons S.A."/>
            <person name="Olsen-Rasmussen M."/>
            <person name="Osborne J."/>
            <person name="Wohlhueter R."/>
        </authorList>
    </citation>
    <scope>NUCLEOTIDE SEQUENCE [LARGE SCALE GENOMIC DNA]</scope>
</reference>